<sequence length="66" mass="7597">MNAQELRNKTPDQLREDLVTLKKEAFNLRFQQATGQLENNARIRTVRRDVARVMTVLNEKAAEAAN</sequence>
<gene>
    <name evidence="1" type="primary">rpmC</name>
    <name type="ordered locus">SPO0493</name>
</gene>
<comment type="similarity">
    <text evidence="1">Belongs to the universal ribosomal protein uL29 family.</text>
</comment>
<feature type="chain" id="PRO_0000130453" description="Large ribosomal subunit protein uL29">
    <location>
        <begin position="1"/>
        <end position="66"/>
    </location>
</feature>
<name>RL29_RUEPO</name>
<protein>
    <recommendedName>
        <fullName evidence="1">Large ribosomal subunit protein uL29</fullName>
    </recommendedName>
    <alternativeName>
        <fullName evidence="2">50S ribosomal protein L29</fullName>
    </alternativeName>
</protein>
<organism>
    <name type="scientific">Ruegeria pomeroyi (strain ATCC 700808 / DSM 15171 / DSS-3)</name>
    <name type="common">Silicibacter pomeroyi</name>
    <dbReference type="NCBI Taxonomy" id="246200"/>
    <lineage>
        <taxon>Bacteria</taxon>
        <taxon>Pseudomonadati</taxon>
        <taxon>Pseudomonadota</taxon>
        <taxon>Alphaproteobacteria</taxon>
        <taxon>Rhodobacterales</taxon>
        <taxon>Roseobacteraceae</taxon>
        <taxon>Ruegeria</taxon>
    </lineage>
</organism>
<proteinExistence type="inferred from homology"/>
<keyword id="KW-1185">Reference proteome</keyword>
<keyword id="KW-0687">Ribonucleoprotein</keyword>
<keyword id="KW-0689">Ribosomal protein</keyword>
<reference key="1">
    <citation type="journal article" date="2004" name="Nature">
        <title>Genome sequence of Silicibacter pomeroyi reveals adaptations to the marine environment.</title>
        <authorList>
            <person name="Moran M.A."/>
            <person name="Buchan A."/>
            <person name="Gonzalez J.M."/>
            <person name="Heidelberg J.F."/>
            <person name="Whitman W.B."/>
            <person name="Kiene R.P."/>
            <person name="Henriksen J.R."/>
            <person name="King G.M."/>
            <person name="Belas R."/>
            <person name="Fuqua C."/>
            <person name="Brinkac L.M."/>
            <person name="Lewis M."/>
            <person name="Johri S."/>
            <person name="Weaver B."/>
            <person name="Pai G."/>
            <person name="Eisen J.A."/>
            <person name="Rahe E."/>
            <person name="Sheldon W.M."/>
            <person name="Ye W."/>
            <person name="Miller T.R."/>
            <person name="Carlton J."/>
            <person name="Rasko D.A."/>
            <person name="Paulsen I.T."/>
            <person name="Ren Q."/>
            <person name="Daugherty S.C."/>
            <person name="DeBoy R.T."/>
            <person name="Dodson R.J."/>
            <person name="Durkin A.S."/>
            <person name="Madupu R."/>
            <person name="Nelson W.C."/>
            <person name="Sullivan S.A."/>
            <person name="Rosovitz M.J."/>
            <person name="Haft D.H."/>
            <person name="Selengut J."/>
            <person name="Ward N."/>
        </authorList>
    </citation>
    <scope>NUCLEOTIDE SEQUENCE [LARGE SCALE GENOMIC DNA]</scope>
    <source>
        <strain>ATCC 700808 / DSM 15171 / DSS-3</strain>
    </source>
</reference>
<reference key="2">
    <citation type="journal article" date="2014" name="Stand. Genomic Sci.">
        <title>An updated genome annotation for the model marine bacterium Ruegeria pomeroyi DSS-3.</title>
        <authorList>
            <person name="Rivers A.R."/>
            <person name="Smith C.B."/>
            <person name="Moran M.A."/>
        </authorList>
    </citation>
    <scope>GENOME REANNOTATION</scope>
    <source>
        <strain>ATCC 700808 / DSM 15171 / DSS-3</strain>
    </source>
</reference>
<dbReference type="EMBL" id="CP000031">
    <property type="protein sequence ID" value="AAV93810.1"/>
    <property type="molecule type" value="Genomic_DNA"/>
</dbReference>
<dbReference type="RefSeq" id="WP_011046253.1">
    <property type="nucleotide sequence ID" value="NC_003911.12"/>
</dbReference>
<dbReference type="SMR" id="Q5LW50"/>
<dbReference type="STRING" id="246200.SPO0493"/>
<dbReference type="PaxDb" id="246200-SPO0493"/>
<dbReference type="KEGG" id="sil:SPO0493"/>
<dbReference type="eggNOG" id="COG0255">
    <property type="taxonomic scope" value="Bacteria"/>
</dbReference>
<dbReference type="HOGENOM" id="CLU_158491_1_0_5"/>
<dbReference type="OrthoDB" id="9815192at2"/>
<dbReference type="Proteomes" id="UP000001023">
    <property type="component" value="Chromosome"/>
</dbReference>
<dbReference type="GO" id="GO:0022625">
    <property type="term" value="C:cytosolic large ribosomal subunit"/>
    <property type="evidence" value="ECO:0007669"/>
    <property type="project" value="TreeGrafter"/>
</dbReference>
<dbReference type="GO" id="GO:0003735">
    <property type="term" value="F:structural constituent of ribosome"/>
    <property type="evidence" value="ECO:0007669"/>
    <property type="project" value="InterPro"/>
</dbReference>
<dbReference type="GO" id="GO:0006412">
    <property type="term" value="P:translation"/>
    <property type="evidence" value="ECO:0007669"/>
    <property type="project" value="UniProtKB-UniRule"/>
</dbReference>
<dbReference type="CDD" id="cd00427">
    <property type="entry name" value="Ribosomal_L29_HIP"/>
    <property type="match status" value="1"/>
</dbReference>
<dbReference type="FunFam" id="1.10.287.310:FF:000001">
    <property type="entry name" value="50S ribosomal protein L29"/>
    <property type="match status" value="1"/>
</dbReference>
<dbReference type="Gene3D" id="1.10.287.310">
    <property type="match status" value="1"/>
</dbReference>
<dbReference type="HAMAP" id="MF_00374">
    <property type="entry name" value="Ribosomal_uL29"/>
    <property type="match status" value="1"/>
</dbReference>
<dbReference type="InterPro" id="IPR050063">
    <property type="entry name" value="Ribosomal_protein_uL29"/>
</dbReference>
<dbReference type="InterPro" id="IPR001854">
    <property type="entry name" value="Ribosomal_uL29"/>
</dbReference>
<dbReference type="InterPro" id="IPR018254">
    <property type="entry name" value="Ribosomal_uL29_CS"/>
</dbReference>
<dbReference type="InterPro" id="IPR036049">
    <property type="entry name" value="Ribosomal_uL29_sf"/>
</dbReference>
<dbReference type="NCBIfam" id="TIGR00012">
    <property type="entry name" value="L29"/>
    <property type="match status" value="1"/>
</dbReference>
<dbReference type="PANTHER" id="PTHR10916">
    <property type="entry name" value="60S RIBOSOMAL PROTEIN L35/50S RIBOSOMAL PROTEIN L29"/>
    <property type="match status" value="1"/>
</dbReference>
<dbReference type="PANTHER" id="PTHR10916:SF0">
    <property type="entry name" value="LARGE RIBOSOMAL SUBUNIT PROTEIN UL29C"/>
    <property type="match status" value="1"/>
</dbReference>
<dbReference type="Pfam" id="PF00831">
    <property type="entry name" value="Ribosomal_L29"/>
    <property type="match status" value="1"/>
</dbReference>
<dbReference type="SUPFAM" id="SSF46561">
    <property type="entry name" value="Ribosomal protein L29 (L29p)"/>
    <property type="match status" value="1"/>
</dbReference>
<dbReference type="PROSITE" id="PS00579">
    <property type="entry name" value="RIBOSOMAL_L29"/>
    <property type="match status" value="1"/>
</dbReference>
<accession>Q5LW50</accession>
<evidence type="ECO:0000255" key="1">
    <source>
        <dbReference type="HAMAP-Rule" id="MF_00374"/>
    </source>
</evidence>
<evidence type="ECO:0000305" key="2"/>